<organism>
    <name type="scientific">Clostridium tetani (strain Massachusetts / E88)</name>
    <dbReference type="NCBI Taxonomy" id="212717"/>
    <lineage>
        <taxon>Bacteria</taxon>
        <taxon>Bacillati</taxon>
        <taxon>Bacillota</taxon>
        <taxon>Clostridia</taxon>
        <taxon>Eubacteriales</taxon>
        <taxon>Clostridiaceae</taxon>
        <taxon>Clostridium</taxon>
    </lineage>
</organism>
<keyword id="KW-0170">Cobalt</keyword>
<keyword id="KW-0456">Lyase</keyword>
<keyword id="KW-0464">Manganese</keyword>
<keyword id="KW-1185">Reference proteome</keyword>
<gene>
    <name evidence="1" type="primary">iolE</name>
    <name type="ordered locus">CTC_00512</name>
</gene>
<evidence type="ECO:0000255" key="1">
    <source>
        <dbReference type="HAMAP-Rule" id="MF_01672"/>
    </source>
</evidence>
<accession>Q898E6</accession>
<sequence>MFNKDKVKIGIAPIAWTNDDMPELGAENTFEQCISEMALSGFKGTEVGNKYPRDTKVLKRALELRDMQIASAWFSAFLTTKPYEETEKAFIKHRDFLYEMRSKVIVISEQGHSIQGKMETPIFEEKPIFTEEEWKDLAKGLNKLGKLAKEKNMKVVYHHHMGTGVQTTEEIDKLMEMTDPTLVYLLYDTGHLVFSGEDPIVVLRKYINRIKHVHLKDIREDVVKIVKQKKMSFLQAVKLGAFTVPGDGDIDFKPVFNILAENNYEGWLLVEAEQDPARANPLEYAIKARKYIQEKAAI</sequence>
<reference key="1">
    <citation type="journal article" date="2003" name="Proc. Natl. Acad. Sci. U.S.A.">
        <title>The genome sequence of Clostridium tetani, the causative agent of tetanus disease.</title>
        <authorList>
            <person name="Brueggemann H."/>
            <person name="Baeumer S."/>
            <person name="Fricke W.F."/>
            <person name="Wiezer A."/>
            <person name="Liesegang H."/>
            <person name="Decker I."/>
            <person name="Herzberg C."/>
            <person name="Martinez-Arias R."/>
            <person name="Merkl R."/>
            <person name="Henne A."/>
            <person name="Gottschalk G."/>
        </authorList>
    </citation>
    <scope>NUCLEOTIDE SEQUENCE [LARGE SCALE GENOMIC DNA]</scope>
    <source>
        <strain>Massachusetts / E88</strain>
    </source>
</reference>
<proteinExistence type="inferred from homology"/>
<dbReference type="EC" id="4.2.1.44" evidence="1"/>
<dbReference type="EMBL" id="AE015927">
    <property type="protein sequence ID" value="AAO35135.1"/>
    <property type="molecule type" value="Genomic_DNA"/>
</dbReference>
<dbReference type="RefSeq" id="WP_011098804.1">
    <property type="nucleotide sequence ID" value="NC_004557.1"/>
</dbReference>
<dbReference type="SMR" id="Q898E6"/>
<dbReference type="STRING" id="212717.CTC_00512"/>
<dbReference type="GeneID" id="24252481"/>
<dbReference type="KEGG" id="ctc:CTC_00512"/>
<dbReference type="HOGENOM" id="CLU_059523_0_0_9"/>
<dbReference type="OrthoDB" id="9779184at2"/>
<dbReference type="UniPathway" id="UPA00076">
    <property type="reaction ID" value="UER00144"/>
</dbReference>
<dbReference type="Proteomes" id="UP000001412">
    <property type="component" value="Chromosome"/>
</dbReference>
<dbReference type="GO" id="GO:0030145">
    <property type="term" value="F:manganese ion binding"/>
    <property type="evidence" value="ECO:0007669"/>
    <property type="project" value="UniProtKB-UniRule"/>
</dbReference>
<dbReference type="GO" id="GO:0050114">
    <property type="term" value="F:myo-inosose-2 dehydratase activity"/>
    <property type="evidence" value="ECO:0007669"/>
    <property type="project" value="UniProtKB-UniRule"/>
</dbReference>
<dbReference type="GO" id="GO:0019310">
    <property type="term" value="P:inositol catabolic process"/>
    <property type="evidence" value="ECO:0007669"/>
    <property type="project" value="UniProtKB-UniRule"/>
</dbReference>
<dbReference type="Gene3D" id="3.20.20.150">
    <property type="entry name" value="Divalent-metal-dependent TIM barrel enzymes"/>
    <property type="match status" value="1"/>
</dbReference>
<dbReference type="HAMAP" id="MF_01672">
    <property type="entry name" value="IolE"/>
    <property type="match status" value="1"/>
</dbReference>
<dbReference type="InterPro" id="IPR023952">
    <property type="entry name" value="IolE"/>
</dbReference>
<dbReference type="InterPro" id="IPR030823">
    <property type="entry name" value="IolE/MocC"/>
</dbReference>
<dbReference type="InterPro" id="IPR050312">
    <property type="entry name" value="IolE/XylAMocC-like"/>
</dbReference>
<dbReference type="InterPro" id="IPR036237">
    <property type="entry name" value="Xyl_isomerase-like_sf"/>
</dbReference>
<dbReference type="InterPro" id="IPR013022">
    <property type="entry name" value="Xyl_isomerase-like_TIM-brl"/>
</dbReference>
<dbReference type="NCBIfam" id="TIGR04379">
    <property type="entry name" value="myo_inos_iolE"/>
    <property type="match status" value="1"/>
</dbReference>
<dbReference type="PANTHER" id="PTHR12110">
    <property type="entry name" value="HYDROXYPYRUVATE ISOMERASE"/>
    <property type="match status" value="1"/>
</dbReference>
<dbReference type="PANTHER" id="PTHR12110:SF41">
    <property type="entry name" value="INOSOSE DEHYDRATASE"/>
    <property type="match status" value="1"/>
</dbReference>
<dbReference type="Pfam" id="PF01261">
    <property type="entry name" value="AP_endonuc_2"/>
    <property type="match status" value="1"/>
</dbReference>
<dbReference type="SUPFAM" id="SSF51658">
    <property type="entry name" value="Xylose isomerase-like"/>
    <property type="match status" value="1"/>
</dbReference>
<feature type="chain" id="PRO_0000352366" description="Inosose dehydratase">
    <location>
        <begin position="1"/>
        <end position="298"/>
    </location>
</feature>
<comment type="function">
    <text evidence="1">Catalyzes the dehydration of inosose (2-keto-myo-inositol, 2KMI or 2,4,6/3,5-pentahydroxycyclohexanone) to 3D-(3,5/4)-trihydroxycyclohexane-1,2-dione (D-2,3-diketo-4-deoxy-epi-inositol).</text>
</comment>
<comment type="catalytic activity">
    <reaction evidence="1">
        <text>scyllo-inosose = 3D-3,5/4-trihydroxycyclohexane-1,2-dione + H2O</text>
        <dbReference type="Rhea" id="RHEA:14065"/>
        <dbReference type="ChEBI" id="CHEBI:15377"/>
        <dbReference type="ChEBI" id="CHEBI:17811"/>
        <dbReference type="ChEBI" id="CHEBI:28446"/>
        <dbReference type="EC" id="4.2.1.44"/>
    </reaction>
</comment>
<comment type="cofactor">
    <cofactor evidence="1">
        <name>glutathione</name>
        <dbReference type="ChEBI" id="CHEBI:57925"/>
    </cofactor>
</comment>
<comment type="cofactor">
    <cofactor evidence="1">
        <name>Co(2+)</name>
        <dbReference type="ChEBI" id="CHEBI:48828"/>
    </cofactor>
    <cofactor evidence="1">
        <name>Mn(2+)</name>
        <dbReference type="ChEBI" id="CHEBI:29035"/>
    </cofactor>
</comment>
<comment type="pathway">
    <text evidence="1">Polyol metabolism; myo-inositol degradation into acetyl-CoA; acetyl-CoA from myo-inositol: step 2/7.</text>
</comment>
<comment type="similarity">
    <text evidence="1">Belongs to the IolE/MocC family.</text>
</comment>
<name>IOLE_CLOTE</name>
<protein>
    <recommendedName>
        <fullName evidence="1">Inosose dehydratase</fullName>
        <ecNumber evidence="1">4.2.1.44</ecNumber>
    </recommendedName>
    <alternativeName>
        <fullName evidence="1">2-keto-myo-inositol dehydratase</fullName>
        <shortName evidence="1">2KMI dehydratase</shortName>
    </alternativeName>
</protein>